<comment type="function">
    <text evidence="1">Involved in a cysteine salvage pathway from S-alkylcysteine. Catalyzes the oxidation of N-acetyl-S-benzyl-L-cysteine and N-acetyl-S-methyl-L-cysteine to (R)-N-acetyl-S-benzyl-L-cysteine sulfoxide and (R)-N-acetyl-S-methyl-L-cysteine sulfoxide, respectively. This pathway is likely important in the catabolism of alkylated cysteine generated by proteolysis of alkylated glutathione formed in the detoxification of a wide range of electrophiles.</text>
</comment>
<comment type="catalytic activity">
    <reaction evidence="1">
        <text>N-acetyl-S-benzyl-L-cysteine + FMNH2 + O2 = (R)-N-acetyl-S-benzyl-L-cysteine sulfoxide + FMN + H2O + H(+)</text>
        <dbReference type="Rhea" id="RHEA:75519"/>
        <dbReference type="ChEBI" id="CHEBI:15377"/>
        <dbReference type="ChEBI" id="CHEBI:15378"/>
        <dbReference type="ChEBI" id="CHEBI:15379"/>
        <dbReference type="ChEBI" id="CHEBI:57618"/>
        <dbReference type="ChEBI" id="CHEBI:58210"/>
        <dbReference type="ChEBI" id="CHEBI:194342"/>
        <dbReference type="ChEBI" id="CHEBI:194343"/>
    </reaction>
    <physiologicalReaction direction="left-to-right" evidence="4">
        <dbReference type="Rhea" id="RHEA:75520"/>
    </physiologicalReaction>
</comment>
<comment type="catalytic activity">
    <reaction evidence="1">
        <text>N-acetyl-S-methyl-L-cysteine + FMNH2 + O2 = (R)-N-acetyl-S-methyl-L-cysteine sulfoxide + FMN + H2O + H(+)</text>
        <dbReference type="Rhea" id="RHEA:75535"/>
        <dbReference type="ChEBI" id="CHEBI:15377"/>
        <dbReference type="ChEBI" id="CHEBI:15378"/>
        <dbReference type="ChEBI" id="CHEBI:15379"/>
        <dbReference type="ChEBI" id="CHEBI:57618"/>
        <dbReference type="ChEBI" id="CHEBI:58210"/>
        <dbReference type="ChEBI" id="CHEBI:194347"/>
        <dbReference type="ChEBI" id="CHEBI:194348"/>
    </reaction>
    <physiologicalReaction direction="left-to-right" evidence="4">
        <dbReference type="Rhea" id="RHEA:75536"/>
    </physiologicalReaction>
</comment>
<comment type="pathway">
    <text evidence="4">Amino-acid metabolism.</text>
</comment>
<comment type="similarity">
    <text evidence="3">To bacterial alkanal monooxygenase alpha and beta chains.</text>
</comment>
<accession>O34846</accession>
<protein>
    <recommendedName>
        <fullName evidence="2">N-acetyl-S-alkylcysteine monooxygenase</fullName>
        <ecNumber evidence="1">1.14.14.-</ecNumber>
    </recommendedName>
</protein>
<feature type="chain" id="PRO_0000049900" description="N-acetyl-S-alkylcysteine monooxygenase">
    <location>
        <begin position="1"/>
        <end position="334"/>
    </location>
</feature>
<dbReference type="EC" id="1.14.14.-" evidence="1"/>
<dbReference type="EMBL" id="AF008220">
    <property type="protein sequence ID" value="AAC00330.1"/>
    <property type="molecule type" value="Genomic_DNA"/>
</dbReference>
<dbReference type="EMBL" id="AL009126">
    <property type="protein sequence ID" value="CAB14893.1"/>
    <property type="molecule type" value="Genomic_DNA"/>
</dbReference>
<dbReference type="PIR" id="H69996">
    <property type="entry name" value="H69996"/>
</dbReference>
<dbReference type="RefSeq" id="NP_390811.1">
    <property type="nucleotide sequence ID" value="NC_000964.3"/>
</dbReference>
<dbReference type="RefSeq" id="WP_004398798.1">
    <property type="nucleotide sequence ID" value="NZ_OZ025638.1"/>
</dbReference>
<dbReference type="SMR" id="O34846"/>
<dbReference type="FunCoup" id="O34846">
    <property type="interactions" value="115"/>
</dbReference>
<dbReference type="STRING" id="224308.BSU29330"/>
<dbReference type="PaxDb" id="224308-BSU29330"/>
<dbReference type="EnsemblBacteria" id="CAB14893">
    <property type="protein sequence ID" value="CAB14893"/>
    <property type="gene ID" value="BSU_29330"/>
</dbReference>
<dbReference type="GeneID" id="936618"/>
<dbReference type="KEGG" id="bsu:BSU29330"/>
<dbReference type="PATRIC" id="fig|224308.179.peg.3187"/>
<dbReference type="eggNOG" id="COG2141">
    <property type="taxonomic scope" value="Bacteria"/>
</dbReference>
<dbReference type="InParanoid" id="O34846"/>
<dbReference type="OrthoDB" id="9780518at2"/>
<dbReference type="PhylomeDB" id="O34846"/>
<dbReference type="BioCyc" id="BSUB:BSU29330-MONOMER"/>
<dbReference type="BioCyc" id="MetaCyc:BSU29330-MONOMER"/>
<dbReference type="Proteomes" id="UP000001570">
    <property type="component" value="Chromosome"/>
</dbReference>
<dbReference type="GO" id="GO:0005829">
    <property type="term" value="C:cytosol"/>
    <property type="evidence" value="ECO:0000318"/>
    <property type="project" value="GO_Central"/>
</dbReference>
<dbReference type="GO" id="GO:0004497">
    <property type="term" value="F:monooxygenase activity"/>
    <property type="evidence" value="ECO:0007669"/>
    <property type="project" value="UniProtKB-KW"/>
</dbReference>
<dbReference type="GO" id="GO:0016705">
    <property type="term" value="F:oxidoreductase activity, acting on paired donors, with incorporation or reduction of molecular oxygen"/>
    <property type="evidence" value="ECO:0007669"/>
    <property type="project" value="InterPro"/>
</dbReference>
<dbReference type="CDD" id="cd00347">
    <property type="entry name" value="Flavin_utilizing_monoxygenases"/>
    <property type="match status" value="1"/>
</dbReference>
<dbReference type="FunFam" id="3.20.20.30:FF:000002">
    <property type="entry name" value="LLM class flavin-dependent oxidoreductase"/>
    <property type="match status" value="1"/>
</dbReference>
<dbReference type="Gene3D" id="3.20.20.30">
    <property type="entry name" value="Luciferase-like domain"/>
    <property type="match status" value="1"/>
</dbReference>
<dbReference type="InterPro" id="IPR050766">
    <property type="entry name" value="Bact_Lucif_Oxidored"/>
</dbReference>
<dbReference type="InterPro" id="IPR019949">
    <property type="entry name" value="CmoO-like"/>
</dbReference>
<dbReference type="InterPro" id="IPR011251">
    <property type="entry name" value="Luciferase-like_dom"/>
</dbReference>
<dbReference type="InterPro" id="IPR036661">
    <property type="entry name" value="Luciferase-like_sf"/>
</dbReference>
<dbReference type="NCBIfam" id="TIGR03558">
    <property type="entry name" value="oxido_grp_1"/>
    <property type="match status" value="1"/>
</dbReference>
<dbReference type="PANTHER" id="PTHR30137">
    <property type="entry name" value="LUCIFERASE-LIKE MONOOXYGENASE"/>
    <property type="match status" value="1"/>
</dbReference>
<dbReference type="PANTHER" id="PTHR30137:SF20">
    <property type="entry name" value="N-ACETYL-S-ALKYLCYSTEINE MONOOXYGENASE"/>
    <property type="match status" value="1"/>
</dbReference>
<dbReference type="Pfam" id="PF00296">
    <property type="entry name" value="Bac_luciferase"/>
    <property type="match status" value="1"/>
</dbReference>
<dbReference type="SUPFAM" id="SSF51679">
    <property type="entry name" value="Bacterial luciferase-like"/>
    <property type="match status" value="1"/>
</dbReference>
<proteinExistence type="evidence at protein level"/>
<keyword id="KW-0285">Flavoprotein</keyword>
<keyword id="KW-0288">FMN</keyword>
<keyword id="KW-0503">Monooxygenase</keyword>
<keyword id="KW-0560">Oxidoreductase</keyword>
<keyword id="KW-1185">Reference proteome</keyword>
<name>CMOO_BACSU</name>
<evidence type="ECO:0000269" key="1">
    <source>
    </source>
</evidence>
<evidence type="ECO:0000303" key="2">
    <source>
    </source>
</evidence>
<evidence type="ECO:0000305" key="3"/>
<evidence type="ECO:0000305" key="4">
    <source>
    </source>
</evidence>
<reference key="1">
    <citation type="journal article" date="1997" name="Microbiology">
        <title>Sequencing and functional annotation of the Bacillus subtilis genes in the 200 kb rrnB-dnaB region.</title>
        <authorList>
            <person name="Lapidus A."/>
            <person name="Galleron N."/>
            <person name="Sorokin A."/>
            <person name="Ehrlich S.D."/>
        </authorList>
    </citation>
    <scope>NUCLEOTIDE SEQUENCE [GENOMIC DNA]</scope>
    <source>
        <strain>168</strain>
    </source>
</reference>
<reference key="2">
    <citation type="journal article" date="1997" name="Nature">
        <title>The complete genome sequence of the Gram-positive bacterium Bacillus subtilis.</title>
        <authorList>
            <person name="Kunst F."/>
            <person name="Ogasawara N."/>
            <person name="Moszer I."/>
            <person name="Albertini A.M."/>
            <person name="Alloni G."/>
            <person name="Azevedo V."/>
            <person name="Bertero M.G."/>
            <person name="Bessieres P."/>
            <person name="Bolotin A."/>
            <person name="Borchert S."/>
            <person name="Borriss R."/>
            <person name="Boursier L."/>
            <person name="Brans A."/>
            <person name="Braun M."/>
            <person name="Brignell S.C."/>
            <person name="Bron S."/>
            <person name="Brouillet S."/>
            <person name="Bruschi C.V."/>
            <person name="Caldwell B."/>
            <person name="Capuano V."/>
            <person name="Carter N.M."/>
            <person name="Choi S.-K."/>
            <person name="Codani J.-J."/>
            <person name="Connerton I.F."/>
            <person name="Cummings N.J."/>
            <person name="Daniel R.A."/>
            <person name="Denizot F."/>
            <person name="Devine K.M."/>
            <person name="Duesterhoeft A."/>
            <person name="Ehrlich S.D."/>
            <person name="Emmerson P.T."/>
            <person name="Entian K.-D."/>
            <person name="Errington J."/>
            <person name="Fabret C."/>
            <person name="Ferrari E."/>
            <person name="Foulger D."/>
            <person name="Fritz C."/>
            <person name="Fujita M."/>
            <person name="Fujita Y."/>
            <person name="Fuma S."/>
            <person name="Galizzi A."/>
            <person name="Galleron N."/>
            <person name="Ghim S.-Y."/>
            <person name="Glaser P."/>
            <person name="Goffeau A."/>
            <person name="Golightly E.J."/>
            <person name="Grandi G."/>
            <person name="Guiseppi G."/>
            <person name="Guy B.J."/>
            <person name="Haga K."/>
            <person name="Haiech J."/>
            <person name="Harwood C.R."/>
            <person name="Henaut A."/>
            <person name="Hilbert H."/>
            <person name="Holsappel S."/>
            <person name="Hosono S."/>
            <person name="Hullo M.-F."/>
            <person name="Itaya M."/>
            <person name="Jones L.-M."/>
            <person name="Joris B."/>
            <person name="Karamata D."/>
            <person name="Kasahara Y."/>
            <person name="Klaerr-Blanchard M."/>
            <person name="Klein C."/>
            <person name="Kobayashi Y."/>
            <person name="Koetter P."/>
            <person name="Koningstein G."/>
            <person name="Krogh S."/>
            <person name="Kumano M."/>
            <person name="Kurita K."/>
            <person name="Lapidus A."/>
            <person name="Lardinois S."/>
            <person name="Lauber J."/>
            <person name="Lazarevic V."/>
            <person name="Lee S.-M."/>
            <person name="Levine A."/>
            <person name="Liu H."/>
            <person name="Masuda S."/>
            <person name="Mauel C."/>
            <person name="Medigue C."/>
            <person name="Medina N."/>
            <person name="Mellado R.P."/>
            <person name="Mizuno M."/>
            <person name="Moestl D."/>
            <person name="Nakai S."/>
            <person name="Noback M."/>
            <person name="Noone D."/>
            <person name="O'Reilly M."/>
            <person name="Ogawa K."/>
            <person name="Ogiwara A."/>
            <person name="Oudega B."/>
            <person name="Park S.-H."/>
            <person name="Parro V."/>
            <person name="Pohl T.M."/>
            <person name="Portetelle D."/>
            <person name="Porwollik S."/>
            <person name="Prescott A.M."/>
            <person name="Presecan E."/>
            <person name="Pujic P."/>
            <person name="Purnelle B."/>
            <person name="Rapoport G."/>
            <person name="Rey M."/>
            <person name="Reynolds S."/>
            <person name="Rieger M."/>
            <person name="Rivolta C."/>
            <person name="Rocha E."/>
            <person name="Roche B."/>
            <person name="Rose M."/>
            <person name="Sadaie Y."/>
            <person name="Sato T."/>
            <person name="Scanlan E."/>
            <person name="Schleich S."/>
            <person name="Schroeter R."/>
            <person name="Scoffone F."/>
            <person name="Sekiguchi J."/>
            <person name="Sekowska A."/>
            <person name="Seror S.J."/>
            <person name="Serror P."/>
            <person name="Shin B.-S."/>
            <person name="Soldo B."/>
            <person name="Sorokin A."/>
            <person name="Tacconi E."/>
            <person name="Takagi T."/>
            <person name="Takahashi H."/>
            <person name="Takemaru K."/>
            <person name="Takeuchi M."/>
            <person name="Tamakoshi A."/>
            <person name="Tanaka T."/>
            <person name="Terpstra P."/>
            <person name="Tognoni A."/>
            <person name="Tosato V."/>
            <person name="Uchiyama S."/>
            <person name="Vandenbol M."/>
            <person name="Vannier F."/>
            <person name="Vassarotti A."/>
            <person name="Viari A."/>
            <person name="Wambutt R."/>
            <person name="Wedler E."/>
            <person name="Wedler H."/>
            <person name="Weitzenegger T."/>
            <person name="Winters P."/>
            <person name="Wipat A."/>
            <person name="Yamamoto H."/>
            <person name="Yamane K."/>
            <person name="Yasumoto K."/>
            <person name="Yata K."/>
            <person name="Yoshida K."/>
            <person name="Yoshikawa H.-F."/>
            <person name="Zumstein E."/>
            <person name="Yoshikawa H."/>
            <person name="Danchin A."/>
        </authorList>
    </citation>
    <scope>NUCLEOTIDE SEQUENCE [LARGE SCALE GENOMIC DNA]</scope>
    <source>
        <strain>168</strain>
    </source>
</reference>
<reference key="3">
    <citation type="journal article" date="2022" name="Biochemistry">
        <title>Cysteine Dealkylation in Bacillus subtilis by a Novel Flavin-Dependent Monooxygenase.</title>
        <authorList>
            <person name="Hazra S."/>
            <person name="Bhandari D.M."/>
            <person name="Krishnamoorthy K."/>
            <person name="Sekowska A."/>
            <person name="Danchin A."/>
            <person name="Begley T.P."/>
        </authorList>
    </citation>
    <scope>FUNCTION</scope>
    <scope>CATALYTIC ACTIVITY</scope>
    <scope>PATHWAY</scope>
</reference>
<organism>
    <name type="scientific">Bacillus subtilis (strain 168)</name>
    <dbReference type="NCBI Taxonomy" id="224308"/>
    <lineage>
        <taxon>Bacteria</taxon>
        <taxon>Bacillati</taxon>
        <taxon>Bacillota</taxon>
        <taxon>Bacilli</taxon>
        <taxon>Bacillales</taxon>
        <taxon>Bacillaceae</taxon>
        <taxon>Bacillus</taxon>
    </lineage>
</organism>
<gene>
    <name evidence="2" type="primary">cmoO</name>
    <name type="synonym">ytmO</name>
    <name type="ordered locus">BSU29330</name>
</gene>
<sequence>MIRLSILDQSLIGEGETAADTLQHTVKLAQMAEECGYHRFWVAEHHNNDEIAGSAPEVLLGYLAASTRKIRLASGGVMLQHYSSYKVAEQFHLLSALAPGRIDLGVGKAPGGFQLSTDALQAEYKKPVRQFDEKLEELTHFVRDDFPDTHRYAALRPRPQVDRKPGIFLLGGSTESAISAAKLGISFVFAYFINGEEEVLKEARRAFDAHLPPGSEAEFHLAPAVFAAHTKEEAEKHIVSRESIKVVLKDGRKVNVGSREQAEAYLENVTEPYDIIVQKTGIIAGTKEEVAEELTRLSGTYKINDFVIFTPIKNAVEKQLSYQLLSDAVLAAKR</sequence>